<organism>
    <name type="scientific">Streptococcus pyogenes serotype M6 (strain ATCC BAA-946 / MGAS10394)</name>
    <dbReference type="NCBI Taxonomy" id="286636"/>
    <lineage>
        <taxon>Bacteria</taxon>
        <taxon>Bacillati</taxon>
        <taxon>Bacillota</taxon>
        <taxon>Bacilli</taxon>
        <taxon>Lactobacillales</taxon>
        <taxon>Streptococcaceae</taxon>
        <taxon>Streptococcus</taxon>
    </lineage>
</organism>
<gene>
    <name evidence="1" type="primary">rpsP</name>
    <name type="ordered locus">M6_Spy0667</name>
</gene>
<evidence type="ECO:0000255" key="1">
    <source>
        <dbReference type="HAMAP-Rule" id="MF_00385"/>
    </source>
</evidence>
<evidence type="ECO:0000305" key="2"/>
<reference key="1">
    <citation type="journal article" date="2004" name="J. Infect. Dis.">
        <title>Progress toward characterization of the group A Streptococcus metagenome: complete genome sequence of a macrolide-resistant serotype M6 strain.</title>
        <authorList>
            <person name="Banks D.J."/>
            <person name="Porcella S.F."/>
            <person name="Barbian K.D."/>
            <person name="Beres S.B."/>
            <person name="Philips L.E."/>
            <person name="Voyich J.M."/>
            <person name="DeLeo F.R."/>
            <person name="Martin J.M."/>
            <person name="Somerville G.A."/>
            <person name="Musser J.M."/>
        </authorList>
    </citation>
    <scope>NUCLEOTIDE SEQUENCE [LARGE SCALE GENOMIC DNA]</scope>
    <source>
        <strain>ATCC BAA-946 / MGAS10394</strain>
    </source>
</reference>
<dbReference type="EMBL" id="CP000003">
    <property type="protein sequence ID" value="AAT86802.1"/>
    <property type="molecule type" value="Genomic_DNA"/>
</dbReference>
<dbReference type="RefSeq" id="WP_002985074.1">
    <property type="nucleotide sequence ID" value="NC_006086.1"/>
</dbReference>
<dbReference type="SMR" id="Q5XCR1"/>
<dbReference type="KEGG" id="spa:M6_Spy0667"/>
<dbReference type="HOGENOM" id="CLU_100590_5_0_9"/>
<dbReference type="Proteomes" id="UP000001167">
    <property type="component" value="Chromosome"/>
</dbReference>
<dbReference type="GO" id="GO:0005737">
    <property type="term" value="C:cytoplasm"/>
    <property type="evidence" value="ECO:0007669"/>
    <property type="project" value="UniProtKB-ARBA"/>
</dbReference>
<dbReference type="GO" id="GO:0015935">
    <property type="term" value="C:small ribosomal subunit"/>
    <property type="evidence" value="ECO:0007669"/>
    <property type="project" value="TreeGrafter"/>
</dbReference>
<dbReference type="GO" id="GO:0003735">
    <property type="term" value="F:structural constituent of ribosome"/>
    <property type="evidence" value="ECO:0007669"/>
    <property type="project" value="InterPro"/>
</dbReference>
<dbReference type="GO" id="GO:0006412">
    <property type="term" value="P:translation"/>
    <property type="evidence" value="ECO:0007669"/>
    <property type="project" value="UniProtKB-UniRule"/>
</dbReference>
<dbReference type="FunFam" id="3.30.1320.10:FF:000002">
    <property type="entry name" value="30S ribosomal protein S16"/>
    <property type="match status" value="1"/>
</dbReference>
<dbReference type="Gene3D" id="3.30.1320.10">
    <property type="match status" value="1"/>
</dbReference>
<dbReference type="HAMAP" id="MF_00385">
    <property type="entry name" value="Ribosomal_bS16"/>
    <property type="match status" value="1"/>
</dbReference>
<dbReference type="InterPro" id="IPR000307">
    <property type="entry name" value="Ribosomal_bS16"/>
</dbReference>
<dbReference type="InterPro" id="IPR023803">
    <property type="entry name" value="Ribosomal_bS16_dom_sf"/>
</dbReference>
<dbReference type="NCBIfam" id="TIGR00002">
    <property type="entry name" value="S16"/>
    <property type="match status" value="1"/>
</dbReference>
<dbReference type="PANTHER" id="PTHR12919">
    <property type="entry name" value="30S RIBOSOMAL PROTEIN S16"/>
    <property type="match status" value="1"/>
</dbReference>
<dbReference type="PANTHER" id="PTHR12919:SF20">
    <property type="entry name" value="SMALL RIBOSOMAL SUBUNIT PROTEIN BS16M"/>
    <property type="match status" value="1"/>
</dbReference>
<dbReference type="Pfam" id="PF00886">
    <property type="entry name" value="Ribosomal_S16"/>
    <property type="match status" value="1"/>
</dbReference>
<dbReference type="SUPFAM" id="SSF54565">
    <property type="entry name" value="Ribosomal protein S16"/>
    <property type="match status" value="1"/>
</dbReference>
<sequence>MAVKIRLTRMGSKKKPFYRINVADSRAPRDGRFIETVGTYNPLVAENQITIKEDRVLEWLSKGAQPSDTVRNILSKAGVMAKFHDQKFSK</sequence>
<protein>
    <recommendedName>
        <fullName evidence="1">Small ribosomal subunit protein bS16</fullName>
    </recommendedName>
    <alternativeName>
        <fullName evidence="2">30S ribosomal protein S16</fullName>
    </alternativeName>
</protein>
<comment type="similarity">
    <text evidence="1">Belongs to the bacterial ribosomal protein bS16 family.</text>
</comment>
<feature type="chain" id="PRO_0000167261" description="Small ribosomal subunit protein bS16">
    <location>
        <begin position="1"/>
        <end position="90"/>
    </location>
</feature>
<keyword id="KW-0687">Ribonucleoprotein</keyword>
<keyword id="KW-0689">Ribosomal protein</keyword>
<proteinExistence type="inferred from homology"/>
<name>RS16_STRP6</name>
<accession>Q5XCR1</accession>